<comment type="function">
    <text evidence="3">Peptidoglycan-recognition protein probably involved in innate immunity by binding to peptidoglycans (PGN) of bacteria and activating the prophenoloxidase (proPO) cascade immune response. Binds to 1,3-beta-D-glucan and PGN.</text>
</comment>
<comment type="subcellular location">
    <subcellularLocation>
        <location evidence="3">Secreted</location>
    </subcellularLocation>
</comment>
<comment type="tissue specificity">
    <text evidence="3">Localizes to plasma (at protein level).</text>
</comment>
<comment type="similarity">
    <text evidence="4">Belongs to the N-acetylmuramoyl-L-alanine amidase 2 family.</text>
</comment>
<proteinExistence type="evidence at protein level"/>
<organism>
    <name type="scientific">Holotrichia diomphalia</name>
    <name type="common">Korean black chafer</name>
    <dbReference type="NCBI Taxonomy" id="33394"/>
    <lineage>
        <taxon>Eukaryota</taxon>
        <taxon>Metazoa</taxon>
        <taxon>Ecdysozoa</taxon>
        <taxon>Arthropoda</taxon>
        <taxon>Hexapoda</taxon>
        <taxon>Insecta</taxon>
        <taxon>Pterygota</taxon>
        <taxon>Neoptera</taxon>
        <taxon>Endopterygota</taxon>
        <taxon>Coleoptera</taxon>
        <taxon>Polyphaga</taxon>
        <taxon>Scarabaeiformia</taxon>
        <taxon>Scarabaeidae</taxon>
        <taxon>Melolonthinae</taxon>
        <taxon>Holotrichia</taxon>
    </lineage>
</organism>
<protein>
    <recommendedName>
        <fullName>Peptidoglycan-recognition protein 1</fullName>
    </recommendedName>
    <alternativeName>
        <fullName>Hd-PGRP-1</fullName>
    </alternativeName>
</protein>
<dbReference type="EMBL" id="AB115774">
    <property type="protein sequence ID" value="BAD08316.1"/>
    <property type="molecule type" value="mRNA"/>
</dbReference>
<dbReference type="SMR" id="Q765P4"/>
<dbReference type="GO" id="GO:0005576">
    <property type="term" value="C:extracellular region"/>
    <property type="evidence" value="ECO:0007669"/>
    <property type="project" value="UniProtKB-SubCell"/>
</dbReference>
<dbReference type="GO" id="GO:0008745">
    <property type="term" value="F:N-acetylmuramoyl-L-alanine amidase activity"/>
    <property type="evidence" value="ECO:0007669"/>
    <property type="project" value="InterPro"/>
</dbReference>
<dbReference type="GO" id="GO:0042834">
    <property type="term" value="F:peptidoglycan binding"/>
    <property type="evidence" value="ECO:0007669"/>
    <property type="project" value="InterPro"/>
</dbReference>
<dbReference type="GO" id="GO:0008270">
    <property type="term" value="F:zinc ion binding"/>
    <property type="evidence" value="ECO:0007669"/>
    <property type="project" value="InterPro"/>
</dbReference>
<dbReference type="GO" id="GO:0045087">
    <property type="term" value="P:innate immune response"/>
    <property type="evidence" value="ECO:0007669"/>
    <property type="project" value="UniProtKB-KW"/>
</dbReference>
<dbReference type="GO" id="GO:0009253">
    <property type="term" value="P:peptidoglycan catabolic process"/>
    <property type="evidence" value="ECO:0007669"/>
    <property type="project" value="InterPro"/>
</dbReference>
<dbReference type="CDD" id="cd06583">
    <property type="entry name" value="PGRP"/>
    <property type="match status" value="1"/>
</dbReference>
<dbReference type="FunFam" id="3.40.80.10:FF:000001">
    <property type="entry name" value="Peptidoglycan recognition protein 1"/>
    <property type="match status" value="1"/>
</dbReference>
<dbReference type="Gene3D" id="3.40.80.10">
    <property type="entry name" value="Peptidoglycan recognition protein-like"/>
    <property type="match status" value="1"/>
</dbReference>
<dbReference type="InterPro" id="IPR036505">
    <property type="entry name" value="Amidase/PGRP_sf"/>
</dbReference>
<dbReference type="InterPro" id="IPR002502">
    <property type="entry name" value="Amidase_domain"/>
</dbReference>
<dbReference type="InterPro" id="IPR017331">
    <property type="entry name" value="Peptidoglycan_recognition"/>
</dbReference>
<dbReference type="InterPro" id="IPR015510">
    <property type="entry name" value="PGRP"/>
</dbReference>
<dbReference type="InterPro" id="IPR006619">
    <property type="entry name" value="PGRP_domain_met/bac"/>
</dbReference>
<dbReference type="PANTHER" id="PTHR11022">
    <property type="entry name" value="PEPTIDOGLYCAN RECOGNITION PROTEIN"/>
    <property type="match status" value="1"/>
</dbReference>
<dbReference type="PANTHER" id="PTHR11022:SF74">
    <property type="entry name" value="PEPTIDOGLYCAN-RECOGNITION PROTEIN SA"/>
    <property type="match status" value="1"/>
</dbReference>
<dbReference type="Pfam" id="PF01510">
    <property type="entry name" value="Amidase_2"/>
    <property type="match status" value="1"/>
</dbReference>
<dbReference type="PIRSF" id="PIRSF037945">
    <property type="entry name" value="PGRPs"/>
    <property type="match status" value="1"/>
</dbReference>
<dbReference type="SMART" id="SM00644">
    <property type="entry name" value="Ami_2"/>
    <property type="match status" value="1"/>
</dbReference>
<dbReference type="SMART" id="SM00701">
    <property type="entry name" value="PGRP"/>
    <property type="match status" value="1"/>
</dbReference>
<dbReference type="SUPFAM" id="SSF55846">
    <property type="entry name" value="N-acetylmuramoyl-L-alanine amidase-like"/>
    <property type="match status" value="1"/>
</dbReference>
<keyword id="KW-0903">Direct protein sequencing</keyword>
<keyword id="KW-1015">Disulfide bond</keyword>
<keyword id="KW-0391">Immunity</keyword>
<keyword id="KW-0399">Innate immunity</keyword>
<keyword id="KW-0964">Secreted</keyword>
<keyword id="KW-0732">Signal</keyword>
<evidence type="ECO:0000250" key="1"/>
<evidence type="ECO:0000255" key="2"/>
<evidence type="ECO:0000269" key="3">
    <source>
    </source>
</evidence>
<evidence type="ECO:0000305" key="4"/>
<feature type="signal peptide" evidence="3">
    <location>
        <begin position="1"/>
        <end position="23"/>
    </location>
</feature>
<feature type="chain" id="PRO_0000023916" description="Peptidoglycan-recognition protein 1">
    <location>
        <begin position="24"/>
        <end position="197"/>
    </location>
</feature>
<feature type="domain" description="N-acetylmuramoyl-L-alanine amidase" evidence="2">
    <location>
        <begin position="53"/>
        <end position="180"/>
    </location>
</feature>
<feature type="disulfide bond" evidence="1">
    <location>
        <begin position="31"/>
        <end position="154"/>
    </location>
</feature>
<feature type="disulfide bond" evidence="1">
    <location>
        <begin position="68"/>
        <end position="74"/>
    </location>
</feature>
<sequence length="197" mass="22092">MKLATITFFLLTEIFFYISYAEATRSGPDLCPTIISKRDWGGNAALRVGYTSKPLERVVIHHTVTPECANEARCSSRMVSMQNYHMDELGYDDISYNFVIGGDGRVYEGVGWHKKGSHSPGWDSQSIGIAFIGDFTNKLPSREMLDAAKDLIVCAIELGELTRGYKLLGARNVKATKSPGDKLYREIQNWEGFTRRP</sequence>
<gene>
    <name type="primary">PGRP-1</name>
</gene>
<reference key="1">
    <citation type="journal article" date="2004" name="J. Biol. Chem.">
        <title>Peptidoglycan recognition proteins involved in 1,3-beta-D-glucan-dependent prophenoloxidase activation system of insect.</title>
        <authorList>
            <person name="Lee M.H."/>
            <person name="Osaki T."/>
            <person name="Lee J.Y."/>
            <person name="Baek M.J."/>
            <person name="Zhang R."/>
            <person name="Park J.W."/>
            <person name="Kawabata S."/>
            <person name="Soederhaell K."/>
            <person name="Lee B.L."/>
        </authorList>
    </citation>
    <scope>NUCLEOTIDE SEQUENCE [MRNA]</scope>
    <scope>PROTEIN SEQUENCE OF 24-38</scope>
    <scope>FUNCTION</scope>
    <scope>SUBCELLULAR LOCATION</scope>
    <scope>TISSUE SPECIFICITY</scope>
    <source>
        <tissue>Larva</tissue>
    </source>
</reference>
<name>PGRP1_HOLDI</name>
<accession>Q765P4</accession>